<dbReference type="EMBL" id="AJ002307">
    <property type="protein sequence ID" value="CAA05324.1"/>
    <property type="molecule type" value="mRNA"/>
</dbReference>
<dbReference type="EMBL" id="AF151985">
    <property type="protein sequence ID" value="AAD38046.1"/>
    <property type="molecule type" value="mRNA"/>
</dbReference>
<dbReference type="EMBL" id="AF364049">
    <property type="protein sequence ID" value="AAK50857.1"/>
    <property type="molecule type" value="mRNA"/>
</dbReference>
<dbReference type="EMBL" id="AK089424">
    <property type="protein sequence ID" value="BAC40876.1"/>
    <property type="molecule type" value="mRNA"/>
</dbReference>
<dbReference type="EMBL" id="AK150234">
    <property type="protein sequence ID" value="BAE29399.1"/>
    <property type="molecule type" value="mRNA"/>
</dbReference>
<dbReference type="EMBL" id="AK170681">
    <property type="protein sequence ID" value="BAE41954.1"/>
    <property type="molecule type" value="mRNA"/>
</dbReference>
<dbReference type="EMBL" id="BC004829">
    <property type="protein sequence ID" value="AAH04829.1"/>
    <property type="molecule type" value="mRNA"/>
</dbReference>
<dbReference type="CCDS" id="CCDS25691.1"/>
<dbReference type="RefSeq" id="NP_033330.1">
    <property type="nucleotide sequence ID" value="NM_009304.2"/>
</dbReference>
<dbReference type="SMR" id="O55101"/>
<dbReference type="FunCoup" id="O55101">
    <property type="interactions" value="228"/>
</dbReference>
<dbReference type="STRING" id="10090.ENSMUSP00000026649"/>
<dbReference type="GlyGen" id="O55101">
    <property type="glycosylation" value="1 site"/>
</dbReference>
<dbReference type="PhosphoSitePlus" id="O55101"/>
<dbReference type="SwissPalm" id="O55101"/>
<dbReference type="PaxDb" id="10090-ENSMUSP00000026649"/>
<dbReference type="ProteomicsDB" id="261091"/>
<dbReference type="Pumba" id="O55101"/>
<dbReference type="Antibodypedia" id="32546">
    <property type="antibodies" value="254 antibodies from 30 providers"/>
</dbReference>
<dbReference type="DNASU" id="20973"/>
<dbReference type="Ensembl" id="ENSMUST00000026649.14">
    <property type="protein sequence ID" value="ENSMUSP00000026649.8"/>
    <property type="gene ID" value="ENSMUSG00000048277.16"/>
</dbReference>
<dbReference type="GeneID" id="20973"/>
<dbReference type="KEGG" id="mmu:20973"/>
<dbReference type="UCSC" id="uc007mnx.2">
    <property type="organism name" value="mouse"/>
</dbReference>
<dbReference type="AGR" id="MGI:1328324"/>
<dbReference type="CTD" id="9144"/>
<dbReference type="MGI" id="MGI:1328324">
    <property type="gene designation" value="Syngr2"/>
</dbReference>
<dbReference type="VEuPathDB" id="HostDB:ENSMUSG00000048277"/>
<dbReference type="eggNOG" id="KOG4016">
    <property type="taxonomic scope" value="Eukaryota"/>
</dbReference>
<dbReference type="GeneTree" id="ENSGT00950000182935"/>
<dbReference type="InParanoid" id="O55101"/>
<dbReference type="OMA" id="YVPFMSN"/>
<dbReference type="OrthoDB" id="10041611at2759"/>
<dbReference type="PhylomeDB" id="O55101"/>
<dbReference type="TreeFam" id="TF320995"/>
<dbReference type="BioGRID-ORCS" id="20973">
    <property type="hits" value="3 hits in 76 CRISPR screens"/>
</dbReference>
<dbReference type="ChiTaRS" id="Syngr2">
    <property type="organism name" value="mouse"/>
</dbReference>
<dbReference type="PRO" id="PR:O55101"/>
<dbReference type="Proteomes" id="UP000000589">
    <property type="component" value="Chromosome 11"/>
</dbReference>
<dbReference type="RNAct" id="O55101">
    <property type="molecule type" value="protein"/>
</dbReference>
<dbReference type="Bgee" id="ENSMUSG00000048277">
    <property type="expression patterns" value="Expressed in peripheral lymph node and 253 other cell types or tissues"/>
</dbReference>
<dbReference type="ExpressionAtlas" id="O55101">
    <property type="expression patterns" value="baseline and differential"/>
</dbReference>
<dbReference type="GO" id="GO:0008021">
    <property type="term" value="C:synaptic vesicle"/>
    <property type="evidence" value="ECO:0000314"/>
    <property type="project" value="MGI"/>
</dbReference>
<dbReference type="GO" id="GO:0030672">
    <property type="term" value="C:synaptic vesicle membrane"/>
    <property type="evidence" value="ECO:0000250"/>
    <property type="project" value="UniProtKB"/>
</dbReference>
<dbReference type="GO" id="GO:0006605">
    <property type="term" value="P:protein targeting"/>
    <property type="evidence" value="ECO:0000266"/>
    <property type="project" value="MGI"/>
</dbReference>
<dbReference type="GO" id="GO:0045055">
    <property type="term" value="P:regulated exocytosis"/>
    <property type="evidence" value="ECO:0000250"/>
    <property type="project" value="UniProtKB"/>
</dbReference>
<dbReference type="GO" id="GO:0048499">
    <property type="term" value="P:synaptic vesicle membrane organization"/>
    <property type="evidence" value="ECO:0000250"/>
    <property type="project" value="UniProtKB"/>
</dbReference>
<dbReference type="InterPro" id="IPR008253">
    <property type="entry name" value="Marvel"/>
</dbReference>
<dbReference type="InterPro" id="IPR016579">
    <property type="entry name" value="Synaptogyrin"/>
</dbReference>
<dbReference type="PANTHER" id="PTHR10838">
    <property type="entry name" value="SYNAPTOGYRIN"/>
    <property type="match status" value="1"/>
</dbReference>
<dbReference type="PANTHER" id="PTHR10838:SF19">
    <property type="entry name" value="SYNAPTOGYRIN-2 LIKE PROTEIN-RELATED"/>
    <property type="match status" value="1"/>
</dbReference>
<dbReference type="Pfam" id="PF01284">
    <property type="entry name" value="MARVEL"/>
    <property type="match status" value="1"/>
</dbReference>
<dbReference type="PIRSF" id="PIRSF011282">
    <property type="entry name" value="Synaptogyrin"/>
    <property type="match status" value="1"/>
</dbReference>
<dbReference type="PROSITE" id="PS51225">
    <property type="entry name" value="MARVEL"/>
    <property type="match status" value="1"/>
</dbReference>
<evidence type="ECO:0000250" key="1">
    <source>
        <dbReference type="UniProtKB" id="O43760"/>
    </source>
</evidence>
<evidence type="ECO:0000250" key="2">
    <source>
        <dbReference type="UniProtKB" id="O54980"/>
    </source>
</evidence>
<evidence type="ECO:0000255" key="3"/>
<evidence type="ECO:0000255" key="4">
    <source>
        <dbReference type="PROSITE-ProRule" id="PRU00581"/>
    </source>
</evidence>
<evidence type="ECO:0000269" key="5">
    <source>
    </source>
</evidence>
<evidence type="ECO:0000269" key="6">
    <source>
    </source>
</evidence>
<evidence type="ECO:0000303" key="7">
    <source>
    </source>
</evidence>
<evidence type="ECO:0000305" key="8"/>
<evidence type="ECO:0000312" key="9">
    <source>
        <dbReference type="MGI" id="MGI:1328324"/>
    </source>
</evidence>
<name>SNG2_MOUSE</name>
<comment type="function">
    <text evidence="2">May play a role in regulated exocytosis. In neuronal cells, modulates the localization of synaptophysin/SYP into synaptic-like microvesicles and may therefore play a role in the formation and/or the maturation of this vesicles. May also play a role in GLUT4 storage and transport to the plasma membrane.</text>
</comment>
<comment type="subcellular location">
    <subcellularLocation>
        <location evidence="5">Cytoplasmic vesicle membrane</location>
        <topology evidence="3">Multi-pass membrane protein</topology>
    </subcellularLocation>
    <subcellularLocation>
        <location evidence="5">Cytoplasmic vesicle</location>
        <location evidence="5">Secretory vesicle</location>
        <location evidence="5">Synaptic vesicle membrane</location>
        <topology evidence="3">Multi-pass membrane protein</topology>
    </subcellularLocation>
    <text evidence="2">Localizes to cytoplasmic vesicles associated with the recycling endosomes.</text>
</comment>
<comment type="PTM">
    <text evidence="2">May be tyrosine phosphorylated by Src.</text>
</comment>
<comment type="similarity">
    <text evidence="8">Belongs to the synaptogyrin family.</text>
</comment>
<gene>
    <name evidence="9" type="primary">Syngr2</name>
</gene>
<sequence length="224" mass="24778">MESGAYGAANAGGSFDLRRFLSQPQVVTRLVSMVLALIVFSCIFGEGYTNIHTSDQLYCVFNQNEDACRYGSAIGVLAFLASAFFLVVDAFFSQISNATDRKYLVIGDLLFSALWTFLWFVGFCFLTNQWAATKPQDVRVGADSARAAITFSFFSIFSWGVLASLAYQRYKAGVDAFIQNYVDPTPDPNTAYASYPSASVENYQQPPFTQNVETTEGYQPPPVY</sequence>
<accession>O55101</accession>
<accession>Q3TCK2</accession>
<accession>Q8C225</accession>
<accession>Q99K83</accession>
<organism>
    <name type="scientific">Mus musculus</name>
    <name type="common">Mouse</name>
    <dbReference type="NCBI Taxonomy" id="10090"/>
    <lineage>
        <taxon>Eukaryota</taxon>
        <taxon>Metazoa</taxon>
        <taxon>Chordata</taxon>
        <taxon>Craniata</taxon>
        <taxon>Vertebrata</taxon>
        <taxon>Euteleostomi</taxon>
        <taxon>Mammalia</taxon>
        <taxon>Eutheria</taxon>
        <taxon>Euarchontoglires</taxon>
        <taxon>Glires</taxon>
        <taxon>Rodentia</taxon>
        <taxon>Myomorpha</taxon>
        <taxon>Muroidea</taxon>
        <taxon>Muridae</taxon>
        <taxon>Murinae</taxon>
        <taxon>Mus</taxon>
        <taxon>Mus</taxon>
    </lineage>
</organism>
<protein>
    <recommendedName>
        <fullName evidence="8">Synaptogyrin-2</fullName>
    </recommendedName>
    <alternativeName>
        <fullName evidence="7">Cellugyrin</fullName>
    </alternativeName>
</protein>
<keyword id="KW-0007">Acetylation</keyword>
<keyword id="KW-0968">Cytoplasmic vesicle</keyword>
<keyword id="KW-0472">Membrane</keyword>
<keyword id="KW-0597">Phosphoprotein</keyword>
<keyword id="KW-1185">Reference proteome</keyword>
<keyword id="KW-0770">Synapse</keyword>
<keyword id="KW-0812">Transmembrane</keyword>
<keyword id="KW-1133">Transmembrane helix</keyword>
<proteinExistence type="evidence at transcript level"/>
<reference key="1">
    <citation type="journal article" date="1998" name="Hum. Genet.">
        <title>Characterization of the human synaptogyrin gene family.</title>
        <authorList>
            <person name="Kedra D."/>
            <person name="Pan H.-Q."/>
            <person name="Seroussi E."/>
            <person name="Fransson I."/>
            <person name="Guilbaud C."/>
            <person name="Collins J.E."/>
            <person name="Dunham I."/>
            <person name="Blennow E."/>
            <person name="Roe B.A."/>
            <person name="Piehl F."/>
            <person name="Dumanski J.P."/>
        </authorList>
    </citation>
    <scope>NUCLEOTIDE SEQUENCE [MRNA]</scope>
</reference>
<reference key="2">
    <citation type="submission" date="1999-05" db="EMBL/GenBank/DDBJ databases">
        <authorList>
            <person name="Sun M.Y."/>
            <person name="Reay P.A."/>
        </authorList>
    </citation>
    <scope>NUCLEOTIDE SEQUENCE [MRNA]</scope>
</reference>
<reference key="3">
    <citation type="submission" date="2001-03" db="EMBL/GenBank/DDBJ databases">
        <title>Isolation of a CD40-activated gene from murine splenic B cells.</title>
        <authorList>
            <person name="O-Wang J."/>
        </authorList>
    </citation>
    <scope>NUCLEOTIDE SEQUENCE [MRNA]</scope>
    <source>
        <strain>C57BL/6J</strain>
        <tissue>Spleen</tissue>
    </source>
</reference>
<reference key="4">
    <citation type="journal article" date="2005" name="Science">
        <title>The transcriptional landscape of the mammalian genome.</title>
        <authorList>
            <person name="Carninci P."/>
            <person name="Kasukawa T."/>
            <person name="Katayama S."/>
            <person name="Gough J."/>
            <person name="Frith M.C."/>
            <person name="Maeda N."/>
            <person name="Oyama R."/>
            <person name="Ravasi T."/>
            <person name="Lenhard B."/>
            <person name="Wells C."/>
            <person name="Kodzius R."/>
            <person name="Shimokawa K."/>
            <person name="Bajic V.B."/>
            <person name="Brenner S.E."/>
            <person name="Batalov S."/>
            <person name="Forrest A.R."/>
            <person name="Zavolan M."/>
            <person name="Davis M.J."/>
            <person name="Wilming L.G."/>
            <person name="Aidinis V."/>
            <person name="Allen J.E."/>
            <person name="Ambesi-Impiombato A."/>
            <person name="Apweiler R."/>
            <person name="Aturaliya R.N."/>
            <person name="Bailey T.L."/>
            <person name="Bansal M."/>
            <person name="Baxter L."/>
            <person name="Beisel K.W."/>
            <person name="Bersano T."/>
            <person name="Bono H."/>
            <person name="Chalk A.M."/>
            <person name="Chiu K.P."/>
            <person name="Choudhary V."/>
            <person name="Christoffels A."/>
            <person name="Clutterbuck D.R."/>
            <person name="Crowe M.L."/>
            <person name="Dalla E."/>
            <person name="Dalrymple B.P."/>
            <person name="de Bono B."/>
            <person name="Della Gatta G."/>
            <person name="di Bernardo D."/>
            <person name="Down T."/>
            <person name="Engstrom P."/>
            <person name="Fagiolini M."/>
            <person name="Faulkner G."/>
            <person name="Fletcher C.F."/>
            <person name="Fukushima T."/>
            <person name="Furuno M."/>
            <person name="Futaki S."/>
            <person name="Gariboldi M."/>
            <person name="Georgii-Hemming P."/>
            <person name="Gingeras T.R."/>
            <person name="Gojobori T."/>
            <person name="Green R.E."/>
            <person name="Gustincich S."/>
            <person name="Harbers M."/>
            <person name="Hayashi Y."/>
            <person name="Hensch T.K."/>
            <person name="Hirokawa N."/>
            <person name="Hill D."/>
            <person name="Huminiecki L."/>
            <person name="Iacono M."/>
            <person name="Ikeo K."/>
            <person name="Iwama A."/>
            <person name="Ishikawa T."/>
            <person name="Jakt M."/>
            <person name="Kanapin A."/>
            <person name="Katoh M."/>
            <person name="Kawasawa Y."/>
            <person name="Kelso J."/>
            <person name="Kitamura H."/>
            <person name="Kitano H."/>
            <person name="Kollias G."/>
            <person name="Krishnan S.P."/>
            <person name="Kruger A."/>
            <person name="Kummerfeld S.K."/>
            <person name="Kurochkin I.V."/>
            <person name="Lareau L.F."/>
            <person name="Lazarevic D."/>
            <person name="Lipovich L."/>
            <person name="Liu J."/>
            <person name="Liuni S."/>
            <person name="McWilliam S."/>
            <person name="Madan Babu M."/>
            <person name="Madera M."/>
            <person name="Marchionni L."/>
            <person name="Matsuda H."/>
            <person name="Matsuzawa S."/>
            <person name="Miki H."/>
            <person name="Mignone F."/>
            <person name="Miyake S."/>
            <person name="Morris K."/>
            <person name="Mottagui-Tabar S."/>
            <person name="Mulder N."/>
            <person name="Nakano N."/>
            <person name="Nakauchi H."/>
            <person name="Ng P."/>
            <person name="Nilsson R."/>
            <person name="Nishiguchi S."/>
            <person name="Nishikawa S."/>
            <person name="Nori F."/>
            <person name="Ohara O."/>
            <person name="Okazaki Y."/>
            <person name="Orlando V."/>
            <person name="Pang K.C."/>
            <person name="Pavan W.J."/>
            <person name="Pavesi G."/>
            <person name="Pesole G."/>
            <person name="Petrovsky N."/>
            <person name="Piazza S."/>
            <person name="Reed J."/>
            <person name="Reid J.F."/>
            <person name="Ring B.Z."/>
            <person name="Ringwald M."/>
            <person name="Rost B."/>
            <person name="Ruan Y."/>
            <person name="Salzberg S.L."/>
            <person name="Sandelin A."/>
            <person name="Schneider C."/>
            <person name="Schoenbach C."/>
            <person name="Sekiguchi K."/>
            <person name="Semple C.A."/>
            <person name="Seno S."/>
            <person name="Sessa L."/>
            <person name="Sheng Y."/>
            <person name="Shibata Y."/>
            <person name="Shimada H."/>
            <person name="Shimada K."/>
            <person name="Silva D."/>
            <person name="Sinclair B."/>
            <person name="Sperling S."/>
            <person name="Stupka E."/>
            <person name="Sugiura K."/>
            <person name="Sultana R."/>
            <person name="Takenaka Y."/>
            <person name="Taki K."/>
            <person name="Tammoja K."/>
            <person name="Tan S.L."/>
            <person name="Tang S."/>
            <person name="Taylor M.S."/>
            <person name="Tegner J."/>
            <person name="Teichmann S.A."/>
            <person name="Ueda H.R."/>
            <person name="van Nimwegen E."/>
            <person name="Verardo R."/>
            <person name="Wei C.L."/>
            <person name="Yagi K."/>
            <person name="Yamanishi H."/>
            <person name="Zabarovsky E."/>
            <person name="Zhu S."/>
            <person name="Zimmer A."/>
            <person name="Hide W."/>
            <person name="Bult C."/>
            <person name="Grimmond S.M."/>
            <person name="Teasdale R.D."/>
            <person name="Liu E.T."/>
            <person name="Brusic V."/>
            <person name="Quackenbush J."/>
            <person name="Wahlestedt C."/>
            <person name="Mattick J.S."/>
            <person name="Hume D.A."/>
            <person name="Kai C."/>
            <person name="Sasaki D."/>
            <person name="Tomaru Y."/>
            <person name="Fukuda S."/>
            <person name="Kanamori-Katayama M."/>
            <person name="Suzuki M."/>
            <person name="Aoki J."/>
            <person name="Arakawa T."/>
            <person name="Iida J."/>
            <person name="Imamura K."/>
            <person name="Itoh M."/>
            <person name="Kato T."/>
            <person name="Kawaji H."/>
            <person name="Kawagashira N."/>
            <person name="Kawashima T."/>
            <person name="Kojima M."/>
            <person name="Kondo S."/>
            <person name="Konno H."/>
            <person name="Nakano K."/>
            <person name="Ninomiya N."/>
            <person name="Nishio T."/>
            <person name="Okada M."/>
            <person name="Plessy C."/>
            <person name="Shibata K."/>
            <person name="Shiraki T."/>
            <person name="Suzuki S."/>
            <person name="Tagami M."/>
            <person name="Waki K."/>
            <person name="Watahiki A."/>
            <person name="Okamura-Oho Y."/>
            <person name="Suzuki H."/>
            <person name="Kawai J."/>
            <person name="Hayashizaki Y."/>
        </authorList>
    </citation>
    <scope>NUCLEOTIDE SEQUENCE [LARGE SCALE MRNA]</scope>
    <source>
        <strain>C57BL/6J</strain>
        <tissue>Bone marrow</tissue>
        <tissue>Dendritic cell</tissue>
    </source>
</reference>
<reference key="5">
    <citation type="journal article" date="2004" name="Genome Res.">
        <title>The status, quality, and expansion of the NIH full-length cDNA project: the Mammalian Gene Collection (MGC).</title>
        <authorList>
            <consortium name="The MGC Project Team"/>
        </authorList>
    </citation>
    <scope>NUCLEOTIDE SEQUENCE [LARGE SCALE MRNA]</scope>
    <scope>VARIANT ILE-215</scope>
    <source>
        <strain>Czech II</strain>
        <tissue>Mammary tumor</tissue>
    </source>
</reference>
<reference key="6">
    <citation type="journal article" date="2003" name="J. Biol. Chem.">
        <title>Cellugyrin and synaptogyrin facilitate targeting of synaptophysin to a ubiquitous synaptic vesicle-sized compartment in PC12 cells.</title>
        <authorList>
            <person name="Belfort G.M."/>
            <person name="Kandror K.V."/>
        </authorList>
    </citation>
    <scope>SUBCELLULAR LOCATION</scope>
</reference>
<feature type="chain" id="PRO_0000183994" description="Synaptogyrin-2">
    <location>
        <begin position="1"/>
        <end position="224"/>
    </location>
</feature>
<feature type="transmembrane region" description="Helical" evidence="3">
    <location>
        <begin position="31"/>
        <end position="51"/>
    </location>
</feature>
<feature type="transmembrane region" description="Helical" evidence="3">
    <location>
        <begin position="72"/>
        <end position="92"/>
    </location>
</feature>
<feature type="transmembrane region" description="Helical" evidence="3">
    <location>
        <begin position="105"/>
        <end position="125"/>
    </location>
</feature>
<feature type="transmembrane region" description="Helical" evidence="3">
    <location>
        <begin position="147"/>
        <end position="167"/>
    </location>
</feature>
<feature type="domain" description="MARVEL" evidence="4">
    <location>
        <begin position="20"/>
        <end position="171"/>
    </location>
</feature>
<feature type="modified residue" description="N-acetylmethionine" evidence="1">
    <location>
        <position position="1"/>
    </location>
</feature>
<feature type="modified residue" description="Phosphoserine" evidence="1">
    <location>
        <position position="3"/>
    </location>
</feature>
<feature type="sequence variant" evidence="6">
    <original>T</original>
    <variation>I</variation>
    <location>
        <position position="215"/>
    </location>
</feature>
<feature type="sequence conflict" description="In Ref. 4; BAC40876." evidence="8" ref="4">
    <original>R</original>
    <variation>H</variation>
    <location>
        <position position="69"/>
    </location>
</feature>